<dbReference type="EMBL" id="CU329671">
    <property type="protein sequence ID" value="CAB36863.2"/>
    <property type="molecule type" value="Genomic_DNA"/>
</dbReference>
<dbReference type="PIR" id="T40690">
    <property type="entry name" value="T40690"/>
</dbReference>
<dbReference type="RefSeq" id="NP_595633.2">
    <property type="nucleotide sequence ID" value="NM_001021527.2"/>
</dbReference>
<dbReference type="FunCoup" id="O94685">
    <property type="interactions" value="10"/>
</dbReference>
<dbReference type="STRING" id="284812.O94685"/>
<dbReference type="iPTMnet" id="O94685"/>
<dbReference type="SwissPalm" id="O94685"/>
<dbReference type="PaxDb" id="4896-SPBC83.01.1"/>
<dbReference type="EnsemblFungi" id="SPBC83.01.1">
    <property type="protein sequence ID" value="SPBC83.01.1:pep"/>
    <property type="gene ID" value="SPBC83.01"/>
</dbReference>
<dbReference type="GeneID" id="2540786"/>
<dbReference type="KEGG" id="spo:2540786"/>
<dbReference type="PomBase" id="SPBC83.01">
    <property type="gene designation" value="ucp8"/>
</dbReference>
<dbReference type="VEuPathDB" id="FungiDB:SPBC83.01"/>
<dbReference type="eggNOG" id="KOG0998">
    <property type="taxonomic scope" value="Eukaryota"/>
</dbReference>
<dbReference type="HOGENOM" id="CLU_341989_0_0_1"/>
<dbReference type="InParanoid" id="O94685"/>
<dbReference type="OMA" id="VPFFMAS"/>
<dbReference type="Reactome" id="R-SPO-416482">
    <property type="pathway name" value="G alpha (12/13) signalling events"/>
</dbReference>
<dbReference type="Reactome" id="R-SPO-8856828">
    <property type="pathway name" value="Clathrin-mediated endocytosis"/>
</dbReference>
<dbReference type="Reactome" id="R-SPO-9013148">
    <property type="pathway name" value="CDC42 GTPase cycle"/>
</dbReference>
<dbReference type="Reactome" id="R-SPO-9013406">
    <property type="pathway name" value="RHOQ GTPase cycle"/>
</dbReference>
<dbReference type="Reactome" id="R-SPO-9013420">
    <property type="pathway name" value="RHOU GTPase cycle"/>
</dbReference>
<dbReference type="PRO" id="PR:O94685"/>
<dbReference type="Proteomes" id="UP000002485">
    <property type="component" value="Chromosome II"/>
</dbReference>
<dbReference type="GO" id="GO:0030479">
    <property type="term" value="C:actin cortical patch"/>
    <property type="evidence" value="ECO:0000266"/>
    <property type="project" value="PomBase"/>
</dbReference>
<dbReference type="GO" id="GO:0005737">
    <property type="term" value="C:cytoplasm"/>
    <property type="evidence" value="ECO:0000318"/>
    <property type="project" value="GO_Central"/>
</dbReference>
<dbReference type="GO" id="GO:0005886">
    <property type="term" value="C:plasma membrane"/>
    <property type="evidence" value="ECO:0000318"/>
    <property type="project" value="GO_Central"/>
</dbReference>
<dbReference type="GO" id="GO:0005509">
    <property type="term" value="F:calcium ion binding"/>
    <property type="evidence" value="ECO:0000255"/>
    <property type="project" value="PomBase"/>
</dbReference>
<dbReference type="GO" id="GO:0031593">
    <property type="term" value="F:polyubiquitin modification-dependent protein binding"/>
    <property type="evidence" value="ECO:0000304"/>
    <property type="project" value="PomBase"/>
</dbReference>
<dbReference type="GO" id="GO:0000147">
    <property type="term" value="P:actin cortical patch assembly"/>
    <property type="evidence" value="ECO:0000266"/>
    <property type="project" value="PomBase"/>
</dbReference>
<dbReference type="GO" id="GO:0006897">
    <property type="term" value="P:endocytosis"/>
    <property type="evidence" value="ECO:0000318"/>
    <property type="project" value="GO_Central"/>
</dbReference>
<dbReference type="GO" id="GO:0016197">
    <property type="term" value="P:endosomal transport"/>
    <property type="evidence" value="ECO:0000318"/>
    <property type="project" value="GO_Central"/>
</dbReference>
<dbReference type="GO" id="GO:0006886">
    <property type="term" value="P:intracellular protein transport"/>
    <property type="evidence" value="ECO:0000305"/>
    <property type="project" value="PomBase"/>
</dbReference>
<dbReference type="CDD" id="cd00052">
    <property type="entry name" value="EH"/>
    <property type="match status" value="3"/>
</dbReference>
<dbReference type="CDD" id="cd14270">
    <property type="entry name" value="UBA"/>
    <property type="match status" value="1"/>
</dbReference>
<dbReference type="Gene3D" id="1.10.8.10">
    <property type="entry name" value="DNA helicase RuvA subunit, C-terminal domain"/>
    <property type="match status" value="1"/>
</dbReference>
<dbReference type="Gene3D" id="1.10.238.10">
    <property type="entry name" value="EF-hand"/>
    <property type="match status" value="3"/>
</dbReference>
<dbReference type="InterPro" id="IPR011992">
    <property type="entry name" value="EF-hand-dom_pair"/>
</dbReference>
<dbReference type="InterPro" id="IPR002048">
    <property type="entry name" value="EF_hand_dom"/>
</dbReference>
<dbReference type="InterPro" id="IPR000261">
    <property type="entry name" value="EH_dom"/>
</dbReference>
<dbReference type="InterPro" id="IPR015940">
    <property type="entry name" value="UBA"/>
</dbReference>
<dbReference type="InterPro" id="IPR009060">
    <property type="entry name" value="UBA-like_sf"/>
</dbReference>
<dbReference type="PANTHER" id="PTHR11216">
    <property type="entry name" value="EH DOMAIN"/>
    <property type="match status" value="1"/>
</dbReference>
<dbReference type="PANTHER" id="PTHR11216:SF162">
    <property type="entry name" value="UBA DOMAIN-CONTAINING PROTEIN 8"/>
    <property type="match status" value="1"/>
</dbReference>
<dbReference type="Pfam" id="PF12763">
    <property type="entry name" value="EH"/>
    <property type="match status" value="3"/>
</dbReference>
<dbReference type="Pfam" id="PF00627">
    <property type="entry name" value="UBA"/>
    <property type="match status" value="1"/>
</dbReference>
<dbReference type="SMART" id="SM00027">
    <property type="entry name" value="EH"/>
    <property type="match status" value="3"/>
</dbReference>
<dbReference type="SMART" id="SM00165">
    <property type="entry name" value="UBA"/>
    <property type="match status" value="1"/>
</dbReference>
<dbReference type="SUPFAM" id="SSF47473">
    <property type="entry name" value="EF-hand"/>
    <property type="match status" value="3"/>
</dbReference>
<dbReference type="SUPFAM" id="SSF46934">
    <property type="entry name" value="UBA-like"/>
    <property type="match status" value="1"/>
</dbReference>
<dbReference type="PROSITE" id="PS50222">
    <property type="entry name" value="EF_HAND_2"/>
    <property type="match status" value="2"/>
</dbReference>
<dbReference type="PROSITE" id="PS50031">
    <property type="entry name" value="EH"/>
    <property type="match status" value="3"/>
</dbReference>
<dbReference type="PROSITE" id="PS50030">
    <property type="entry name" value="UBA"/>
    <property type="match status" value="1"/>
</dbReference>
<keyword id="KW-0175">Coiled coil</keyword>
<keyword id="KW-0597">Phosphoprotein</keyword>
<keyword id="KW-1185">Reference proteome</keyword>
<keyword id="KW-0677">Repeat</keyword>
<organism>
    <name type="scientific">Schizosaccharomyces pombe (strain 972 / ATCC 24843)</name>
    <name type="common">Fission yeast</name>
    <dbReference type="NCBI Taxonomy" id="284812"/>
    <lineage>
        <taxon>Eukaryota</taxon>
        <taxon>Fungi</taxon>
        <taxon>Dikarya</taxon>
        <taxon>Ascomycota</taxon>
        <taxon>Taphrinomycotina</taxon>
        <taxon>Schizosaccharomycetes</taxon>
        <taxon>Schizosaccharomycetales</taxon>
        <taxon>Schizosaccharomycetaceae</taxon>
        <taxon>Schizosaccharomyces</taxon>
    </lineage>
</organism>
<accession>O94685</accession>
<proteinExistence type="evidence at protein level"/>
<feature type="chain" id="PRO_0000065716" description="UBA domain-containing protein 8">
    <location>
        <begin position="1"/>
        <end position="829"/>
    </location>
</feature>
<feature type="domain" description="EH 1" evidence="2">
    <location>
        <begin position="10"/>
        <end position="109"/>
    </location>
</feature>
<feature type="domain" description="EF-hand 1" evidence="4">
    <location>
        <begin position="43"/>
        <end position="78"/>
    </location>
</feature>
<feature type="domain" description="EH 2" evidence="2">
    <location>
        <begin position="129"/>
        <end position="225"/>
    </location>
</feature>
<feature type="domain" description="EH 3" evidence="2">
    <location>
        <begin position="300"/>
        <end position="398"/>
    </location>
</feature>
<feature type="domain" description="EF-hand 2" evidence="4">
    <location>
        <begin position="333"/>
        <end position="368"/>
    </location>
</feature>
<feature type="domain" description="UBA" evidence="3">
    <location>
        <begin position="788"/>
        <end position="828"/>
    </location>
</feature>
<feature type="region of interest" description="Disordered" evidence="5">
    <location>
        <begin position="93"/>
        <end position="121"/>
    </location>
</feature>
<feature type="region of interest" description="Disordered" evidence="5">
    <location>
        <begin position="466"/>
        <end position="520"/>
    </location>
</feature>
<feature type="region of interest" description="Disordered" evidence="5">
    <location>
        <begin position="574"/>
        <end position="614"/>
    </location>
</feature>
<feature type="region of interest" description="Disordered" evidence="5">
    <location>
        <begin position="724"/>
        <end position="785"/>
    </location>
</feature>
<feature type="coiled-coil region" evidence="1">
    <location>
        <begin position="602"/>
        <end position="709"/>
    </location>
</feature>
<feature type="compositionally biased region" description="Polar residues" evidence="5">
    <location>
        <begin position="466"/>
        <end position="506"/>
    </location>
</feature>
<feature type="compositionally biased region" description="Polar residues" evidence="5">
    <location>
        <begin position="574"/>
        <end position="590"/>
    </location>
</feature>
<feature type="compositionally biased region" description="Pro residues" evidence="5">
    <location>
        <begin position="728"/>
        <end position="737"/>
    </location>
</feature>
<feature type="compositionally biased region" description="Polar residues" evidence="5">
    <location>
        <begin position="764"/>
        <end position="774"/>
    </location>
</feature>
<feature type="compositionally biased region" description="Low complexity" evidence="5">
    <location>
        <begin position="775"/>
        <end position="785"/>
    </location>
</feature>
<feature type="modified residue" description="Phosphoserine" evidence="6">
    <location>
        <position position="112"/>
    </location>
</feature>
<feature type="modified residue" description="Phosphoserine" evidence="6">
    <location>
        <position position="113"/>
    </location>
</feature>
<reference key="1">
    <citation type="journal article" date="2002" name="Nature">
        <title>The genome sequence of Schizosaccharomyces pombe.</title>
        <authorList>
            <person name="Wood V."/>
            <person name="Gwilliam R."/>
            <person name="Rajandream M.A."/>
            <person name="Lyne M.H."/>
            <person name="Lyne R."/>
            <person name="Stewart A."/>
            <person name="Sgouros J.G."/>
            <person name="Peat N."/>
            <person name="Hayles J."/>
            <person name="Baker S.G."/>
            <person name="Basham D."/>
            <person name="Bowman S."/>
            <person name="Brooks K."/>
            <person name="Brown D."/>
            <person name="Brown S."/>
            <person name="Chillingworth T."/>
            <person name="Churcher C.M."/>
            <person name="Collins M."/>
            <person name="Connor R."/>
            <person name="Cronin A."/>
            <person name="Davis P."/>
            <person name="Feltwell T."/>
            <person name="Fraser A."/>
            <person name="Gentles S."/>
            <person name="Goble A."/>
            <person name="Hamlin N."/>
            <person name="Harris D.E."/>
            <person name="Hidalgo J."/>
            <person name="Hodgson G."/>
            <person name="Holroyd S."/>
            <person name="Hornsby T."/>
            <person name="Howarth S."/>
            <person name="Huckle E.J."/>
            <person name="Hunt S."/>
            <person name="Jagels K."/>
            <person name="James K.D."/>
            <person name="Jones L."/>
            <person name="Jones M."/>
            <person name="Leather S."/>
            <person name="McDonald S."/>
            <person name="McLean J."/>
            <person name="Mooney P."/>
            <person name="Moule S."/>
            <person name="Mungall K.L."/>
            <person name="Murphy L.D."/>
            <person name="Niblett D."/>
            <person name="Odell C."/>
            <person name="Oliver K."/>
            <person name="O'Neil S."/>
            <person name="Pearson D."/>
            <person name="Quail M.A."/>
            <person name="Rabbinowitsch E."/>
            <person name="Rutherford K.M."/>
            <person name="Rutter S."/>
            <person name="Saunders D."/>
            <person name="Seeger K."/>
            <person name="Sharp S."/>
            <person name="Skelton J."/>
            <person name="Simmonds M.N."/>
            <person name="Squares R."/>
            <person name="Squares S."/>
            <person name="Stevens K."/>
            <person name="Taylor K."/>
            <person name="Taylor R.G."/>
            <person name="Tivey A."/>
            <person name="Walsh S.V."/>
            <person name="Warren T."/>
            <person name="Whitehead S."/>
            <person name="Woodward J.R."/>
            <person name="Volckaert G."/>
            <person name="Aert R."/>
            <person name="Robben J."/>
            <person name="Grymonprez B."/>
            <person name="Weltjens I."/>
            <person name="Vanstreels E."/>
            <person name="Rieger M."/>
            <person name="Schaefer M."/>
            <person name="Mueller-Auer S."/>
            <person name="Gabel C."/>
            <person name="Fuchs M."/>
            <person name="Duesterhoeft A."/>
            <person name="Fritzc C."/>
            <person name="Holzer E."/>
            <person name="Moestl D."/>
            <person name="Hilbert H."/>
            <person name="Borzym K."/>
            <person name="Langer I."/>
            <person name="Beck A."/>
            <person name="Lehrach H."/>
            <person name="Reinhardt R."/>
            <person name="Pohl T.M."/>
            <person name="Eger P."/>
            <person name="Zimmermann W."/>
            <person name="Wedler H."/>
            <person name="Wambutt R."/>
            <person name="Purnelle B."/>
            <person name="Goffeau A."/>
            <person name="Cadieu E."/>
            <person name="Dreano S."/>
            <person name="Gloux S."/>
            <person name="Lelaure V."/>
            <person name="Mottier S."/>
            <person name="Galibert F."/>
            <person name="Aves S.J."/>
            <person name="Xiang Z."/>
            <person name="Hunt C."/>
            <person name="Moore K."/>
            <person name="Hurst S.M."/>
            <person name="Lucas M."/>
            <person name="Rochet M."/>
            <person name="Gaillardin C."/>
            <person name="Tallada V.A."/>
            <person name="Garzon A."/>
            <person name="Thode G."/>
            <person name="Daga R.R."/>
            <person name="Cruzado L."/>
            <person name="Jimenez J."/>
            <person name="Sanchez M."/>
            <person name="del Rey F."/>
            <person name="Benito J."/>
            <person name="Dominguez A."/>
            <person name="Revuelta J.L."/>
            <person name="Moreno S."/>
            <person name="Armstrong J."/>
            <person name="Forsburg S.L."/>
            <person name="Cerutti L."/>
            <person name="Lowe T."/>
            <person name="McCombie W.R."/>
            <person name="Paulsen I."/>
            <person name="Potashkin J."/>
            <person name="Shpakovski G.V."/>
            <person name="Ussery D."/>
            <person name="Barrell B.G."/>
            <person name="Nurse P."/>
        </authorList>
    </citation>
    <scope>NUCLEOTIDE SEQUENCE [LARGE SCALE GENOMIC DNA]</scope>
    <source>
        <strain>972 / ATCC 24843</strain>
    </source>
</reference>
<reference key="2">
    <citation type="journal article" date="2011" name="Science">
        <title>Comparative functional genomics of the fission yeasts.</title>
        <authorList>
            <person name="Rhind N."/>
            <person name="Chen Z."/>
            <person name="Yassour M."/>
            <person name="Thompson D.A."/>
            <person name="Haas B.J."/>
            <person name="Habib N."/>
            <person name="Wapinski I."/>
            <person name="Roy S."/>
            <person name="Lin M.F."/>
            <person name="Heiman D.I."/>
            <person name="Young S.K."/>
            <person name="Furuya K."/>
            <person name="Guo Y."/>
            <person name="Pidoux A."/>
            <person name="Chen H.M."/>
            <person name="Robbertse B."/>
            <person name="Goldberg J.M."/>
            <person name="Aoki K."/>
            <person name="Bayne E.H."/>
            <person name="Berlin A.M."/>
            <person name="Desjardins C.A."/>
            <person name="Dobbs E."/>
            <person name="Dukaj L."/>
            <person name="Fan L."/>
            <person name="FitzGerald M.G."/>
            <person name="French C."/>
            <person name="Gujja S."/>
            <person name="Hansen K."/>
            <person name="Keifenheim D."/>
            <person name="Levin J.Z."/>
            <person name="Mosher R.A."/>
            <person name="Mueller C.A."/>
            <person name="Pfiffner J."/>
            <person name="Priest M."/>
            <person name="Russ C."/>
            <person name="Smialowska A."/>
            <person name="Swoboda P."/>
            <person name="Sykes S.M."/>
            <person name="Vaughn M."/>
            <person name="Vengrova S."/>
            <person name="Yoder R."/>
            <person name="Zeng Q."/>
            <person name="Allshire R."/>
            <person name="Baulcombe D."/>
            <person name="Birren B.W."/>
            <person name="Brown W."/>
            <person name="Ekwall K."/>
            <person name="Kellis M."/>
            <person name="Leatherwood J."/>
            <person name="Levin H."/>
            <person name="Margalit H."/>
            <person name="Martienssen R."/>
            <person name="Nieduszynski C.A."/>
            <person name="Spatafora J.W."/>
            <person name="Friedman N."/>
            <person name="Dalgaard J.Z."/>
            <person name="Baumann P."/>
            <person name="Niki H."/>
            <person name="Regev A."/>
            <person name="Nusbaum C."/>
        </authorList>
    </citation>
    <scope>REVISION OF GENE MODEL</scope>
</reference>
<reference key="3">
    <citation type="journal article" date="2001" name="Nat. Cell Biol.">
        <title>Proteins containing the UBA domain are able to bind to multi-ubiquitin chains.</title>
        <authorList>
            <person name="Wilkinson C.R.M."/>
            <person name="Seeger M."/>
            <person name="Hartmann-Petersen R."/>
            <person name="Stone M."/>
            <person name="Wallace M."/>
            <person name="Semple C."/>
            <person name="Gordon C."/>
        </authorList>
    </citation>
    <scope>IDENTIFICATION</scope>
</reference>
<reference key="4">
    <citation type="journal article" date="2008" name="J. Proteome Res.">
        <title>Phosphoproteome analysis of fission yeast.</title>
        <authorList>
            <person name="Wilson-Grady J.T."/>
            <person name="Villen J."/>
            <person name="Gygi S.P."/>
        </authorList>
    </citation>
    <scope>PHOSPHORYLATION [LARGE SCALE ANALYSIS] AT SER-112 AND SER-113</scope>
    <scope>IDENTIFICATION BY MASS SPECTROMETRY</scope>
</reference>
<name>UCP8_SCHPO</name>
<protein>
    <recommendedName>
        <fullName>UBA domain-containing protein 8</fullName>
    </recommendedName>
</protein>
<sequence length="829" mass="91119">MQPLQLSPIEQQEFDRLLESLHPEQKDLIPGSVIGPFLLKFGLPQKILAKIWDYCDQEDKGSLDRNQVYACFRLISQAQRGATLQELDYNKAGDPPILPKQAKDDHHIKRSSSETADFTPFRIPINPDERSEYEKEFRENLRGHEDSARPGCMPSSIAKPILLKSSLHYAVLAQIWNLADSAHVGYLEMYQYVIARHLVAICKQYNLIHLPRSLPADVIESAKSETPAMNTNIEQGVTQPSLVNTEQLSHQQSISSTKSSKLDEISADNNAQSAVDNKYSSPPQTIDPQANIKALITPEDRSNFYQLFSKIDNENKGYIVGGEAVPFFMASHLDSEELARIWDTVDTQDRGYIDKDEFAVAMEIIKLRLSGKSLASILAYDDNPTEPTMQQNLVSDDTNASTAVPVAFTNDNVSNVPLSVADNEPNSTLNLLASSDTAAFEPTAVSLHENPSSSLEDLQSAFQNTSFQDQVSTQNQANTADISQNTESGSSTQGQMFGIPPTTQSIPLKMAGFPGGVNSSLTDIKEEEAVSENAPQQEERSFEQIKTSIHIAPENISAIEESKSVPLPTSFATTIPGSTSAALDDQQTTEAPFEEPDEPAHEPTEEEQEEMRKLEEKIESTKYGLETIQTSGKTIKQRIEQKKTRLMILREELQELDAIKEEAQKQISQSLIADQQLSTQIGSVGMGKKQAVKELRKLQAKIDSIIADSMSPMGTGAVNSPAIKPQVTPAPPTPAPTPAVKHHPPPPPVRSSISPSMPPAPLTHANSSTPMNYVSQPESPPQSYESIQNDNELLQELLSMGFPREKAVIALEATNYDVNEAANILLSSV</sequence>
<evidence type="ECO:0000255" key="1"/>
<evidence type="ECO:0000255" key="2">
    <source>
        <dbReference type="PROSITE-ProRule" id="PRU00077"/>
    </source>
</evidence>
<evidence type="ECO:0000255" key="3">
    <source>
        <dbReference type="PROSITE-ProRule" id="PRU00212"/>
    </source>
</evidence>
<evidence type="ECO:0000255" key="4">
    <source>
        <dbReference type="PROSITE-ProRule" id="PRU00448"/>
    </source>
</evidence>
<evidence type="ECO:0000256" key="5">
    <source>
        <dbReference type="SAM" id="MobiDB-lite"/>
    </source>
</evidence>
<evidence type="ECO:0000269" key="6">
    <source>
    </source>
</evidence>
<gene>
    <name type="primary">ucp8</name>
    <name type="ORF">SPBC83.01</name>
</gene>